<accession>B5BLK7</accession>
<keyword id="KW-0687">Ribonucleoprotein</keyword>
<keyword id="KW-0689">Ribosomal protein</keyword>
<keyword id="KW-0694">RNA-binding</keyword>
<keyword id="KW-0699">rRNA-binding</keyword>
<comment type="function">
    <text evidence="1">Binds directly to 16S ribosomal RNA.</text>
</comment>
<comment type="similarity">
    <text evidence="1">Belongs to the bacterial ribosomal protein bS20 family.</text>
</comment>
<evidence type="ECO:0000255" key="1">
    <source>
        <dbReference type="HAMAP-Rule" id="MF_00500"/>
    </source>
</evidence>
<evidence type="ECO:0000256" key="2">
    <source>
        <dbReference type="SAM" id="MobiDB-lite"/>
    </source>
</evidence>
<evidence type="ECO:0000305" key="3"/>
<reference key="1">
    <citation type="journal article" date="2009" name="BMC Genomics">
        <title>Pseudogene accumulation in the evolutionary histories of Salmonella enterica serovars Paratyphi A and Typhi.</title>
        <authorList>
            <person name="Holt K.E."/>
            <person name="Thomson N.R."/>
            <person name="Wain J."/>
            <person name="Langridge G.C."/>
            <person name="Hasan R."/>
            <person name="Bhutta Z.A."/>
            <person name="Quail M.A."/>
            <person name="Norbertczak H."/>
            <person name="Walker D."/>
            <person name="Simmonds M."/>
            <person name="White B."/>
            <person name="Bason N."/>
            <person name="Mungall K."/>
            <person name="Dougan G."/>
            <person name="Parkhill J."/>
        </authorList>
    </citation>
    <scope>NUCLEOTIDE SEQUENCE [LARGE SCALE GENOMIC DNA]</scope>
    <source>
        <strain>AKU_12601</strain>
    </source>
</reference>
<organism>
    <name type="scientific">Salmonella paratyphi A (strain AKU_12601)</name>
    <dbReference type="NCBI Taxonomy" id="554290"/>
    <lineage>
        <taxon>Bacteria</taxon>
        <taxon>Pseudomonadati</taxon>
        <taxon>Pseudomonadota</taxon>
        <taxon>Gammaproteobacteria</taxon>
        <taxon>Enterobacterales</taxon>
        <taxon>Enterobacteriaceae</taxon>
        <taxon>Salmonella</taxon>
    </lineage>
</organism>
<feature type="chain" id="PRO_1000126510" description="Small ribosomal subunit protein bS20">
    <location>
        <begin position="1"/>
        <end position="87"/>
    </location>
</feature>
<feature type="region of interest" description="Disordered" evidence="2">
    <location>
        <begin position="1"/>
        <end position="26"/>
    </location>
</feature>
<sequence length="87" mass="9655">MANIKSAKKRAVQSEKARKHNASRRSMMRTFIKKVYAAIEAGDKAAALKAFNEMQPIVDRQAAKGLIHKNKAARHKANLTAQINKLA</sequence>
<name>RS20_SALPK</name>
<protein>
    <recommendedName>
        <fullName evidence="1">Small ribosomal subunit protein bS20</fullName>
    </recommendedName>
    <alternativeName>
        <fullName evidence="3">30S ribosomal protein S20</fullName>
    </alternativeName>
</protein>
<proteinExistence type="inferred from homology"/>
<dbReference type="EMBL" id="FM200053">
    <property type="protein sequence ID" value="CAR58151.1"/>
    <property type="molecule type" value="Genomic_DNA"/>
</dbReference>
<dbReference type="RefSeq" id="WP_001518655.1">
    <property type="nucleotide sequence ID" value="NC_011147.1"/>
</dbReference>
<dbReference type="SMR" id="B5BLK7"/>
<dbReference type="GeneID" id="93310349"/>
<dbReference type="KEGG" id="sek:SSPA0040"/>
<dbReference type="HOGENOM" id="CLU_160655_4_0_6"/>
<dbReference type="Proteomes" id="UP000001869">
    <property type="component" value="Chromosome"/>
</dbReference>
<dbReference type="GO" id="GO:0005829">
    <property type="term" value="C:cytosol"/>
    <property type="evidence" value="ECO:0007669"/>
    <property type="project" value="TreeGrafter"/>
</dbReference>
<dbReference type="GO" id="GO:0015935">
    <property type="term" value="C:small ribosomal subunit"/>
    <property type="evidence" value="ECO:0007669"/>
    <property type="project" value="TreeGrafter"/>
</dbReference>
<dbReference type="GO" id="GO:0070181">
    <property type="term" value="F:small ribosomal subunit rRNA binding"/>
    <property type="evidence" value="ECO:0007669"/>
    <property type="project" value="TreeGrafter"/>
</dbReference>
<dbReference type="GO" id="GO:0003735">
    <property type="term" value="F:structural constituent of ribosome"/>
    <property type="evidence" value="ECO:0007669"/>
    <property type="project" value="InterPro"/>
</dbReference>
<dbReference type="GO" id="GO:0006412">
    <property type="term" value="P:translation"/>
    <property type="evidence" value="ECO:0007669"/>
    <property type="project" value="UniProtKB-UniRule"/>
</dbReference>
<dbReference type="FunFam" id="1.20.58.110:FF:000001">
    <property type="entry name" value="30S ribosomal protein S20"/>
    <property type="match status" value="1"/>
</dbReference>
<dbReference type="Gene3D" id="1.20.58.110">
    <property type="entry name" value="Ribosomal protein S20"/>
    <property type="match status" value="1"/>
</dbReference>
<dbReference type="HAMAP" id="MF_00500">
    <property type="entry name" value="Ribosomal_bS20"/>
    <property type="match status" value="1"/>
</dbReference>
<dbReference type="InterPro" id="IPR002583">
    <property type="entry name" value="Ribosomal_bS20"/>
</dbReference>
<dbReference type="InterPro" id="IPR036510">
    <property type="entry name" value="Ribosomal_bS20_sf"/>
</dbReference>
<dbReference type="NCBIfam" id="TIGR00029">
    <property type="entry name" value="S20"/>
    <property type="match status" value="1"/>
</dbReference>
<dbReference type="PANTHER" id="PTHR33398">
    <property type="entry name" value="30S RIBOSOMAL PROTEIN S20"/>
    <property type="match status" value="1"/>
</dbReference>
<dbReference type="PANTHER" id="PTHR33398:SF1">
    <property type="entry name" value="SMALL RIBOSOMAL SUBUNIT PROTEIN BS20C"/>
    <property type="match status" value="1"/>
</dbReference>
<dbReference type="Pfam" id="PF01649">
    <property type="entry name" value="Ribosomal_S20p"/>
    <property type="match status" value="1"/>
</dbReference>
<dbReference type="SUPFAM" id="SSF46992">
    <property type="entry name" value="Ribosomal protein S20"/>
    <property type="match status" value="1"/>
</dbReference>
<gene>
    <name evidence="1" type="primary">rpsT</name>
    <name type="ordered locus">SSPA0040</name>
</gene>